<gene>
    <name evidence="1" type="primary">pgi</name>
    <name type="ordered locus">Shew_1088</name>
</gene>
<name>G6PI_SHELP</name>
<feature type="chain" id="PRO_1000014015" description="Glucose-6-phosphate isomerase">
    <location>
        <begin position="1"/>
        <end position="545"/>
    </location>
</feature>
<feature type="active site" description="Proton donor" evidence="1">
    <location>
        <position position="351"/>
    </location>
</feature>
<feature type="active site" evidence="1">
    <location>
        <position position="382"/>
    </location>
</feature>
<feature type="active site" evidence="1">
    <location>
        <position position="510"/>
    </location>
</feature>
<dbReference type="EC" id="5.3.1.9" evidence="1"/>
<dbReference type="EMBL" id="CP000606">
    <property type="protein sequence ID" value="ABO22959.1"/>
    <property type="molecule type" value="Genomic_DNA"/>
</dbReference>
<dbReference type="RefSeq" id="WP_011864892.1">
    <property type="nucleotide sequence ID" value="NC_009092.1"/>
</dbReference>
<dbReference type="SMR" id="A3QBW1"/>
<dbReference type="STRING" id="323850.Shew_1088"/>
<dbReference type="KEGG" id="slo:Shew_1088"/>
<dbReference type="eggNOG" id="COG0166">
    <property type="taxonomic scope" value="Bacteria"/>
</dbReference>
<dbReference type="HOGENOM" id="CLU_017947_3_1_6"/>
<dbReference type="OrthoDB" id="140919at2"/>
<dbReference type="UniPathway" id="UPA00109">
    <property type="reaction ID" value="UER00181"/>
</dbReference>
<dbReference type="UniPathway" id="UPA00138"/>
<dbReference type="Proteomes" id="UP000001558">
    <property type="component" value="Chromosome"/>
</dbReference>
<dbReference type="GO" id="GO:0005829">
    <property type="term" value="C:cytosol"/>
    <property type="evidence" value="ECO:0007669"/>
    <property type="project" value="TreeGrafter"/>
</dbReference>
<dbReference type="GO" id="GO:0097367">
    <property type="term" value="F:carbohydrate derivative binding"/>
    <property type="evidence" value="ECO:0007669"/>
    <property type="project" value="InterPro"/>
</dbReference>
<dbReference type="GO" id="GO:0004347">
    <property type="term" value="F:glucose-6-phosphate isomerase activity"/>
    <property type="evidence" value="ECO:0007669"/>
    <property type="project" value="UniProtKB-UniRule"/>
</dbReference>
<dbReference type="GO" id="GO:0048029">
    <property type="term" value="F:monosaccharide binding"/>
    <property type="evidence" value="ECO:0007669"/>
    <property type="project" value="TreeGrafter"/>
</dbReference>
<dbReference type="GO" id="GO:0006094">
    <property type="term" value="P:gluconeogenesis"/>
    <property type="evidence" value="ECO:0007669"/>
    <property type="project" value="UniProtKB-UniRule"/>
</dbReference>
<dbReference type="GO" id="GO:0051156">
    <property type="term" value="P:glucose 6-phosphate metabolic process"/>
    <property type="evidence" value="ECO:0007669"/>
    <property type="project" value="TreeGrafter"/>
</dbReference>
<dbReference type="GO" id="GO:0006096">
    <property type="term" value="P:glycolytic process"/>
    <property type="evidence" value="ECO:0007669"/>
    <property type="project" value="UniProtKB-UniRule"/>
</dbReference>
<dbReference type="CDD" id="cd05015">
    <property type="entry name" value="SIS_PGI_1"/>
    <property type="match status" value="1"/>
</dbReference>
<dbReference type="CDD" id="cd05016">
    <property type="entry name" value="SIS_PGI_2"/>
    <property type="match status" value="1"/>
</dbReference>
<dbReference type="FunFam" id="3.40.50.10490:FF:000018">
    <property type="entry name" value="Glucose-6-phosphate isomerase"/>
    <property type="match status" value="1"/>
</dbReference>
<dbReference type="Gene3D" id="1.10.1390.10">
    <property type="match status" value="1"/>
</dbReference>
<dbReference type="Gene3D" id="3.40.50.10490">
    <property type="entry name" value="Glucose-6-phosphate isomerase like protein, domain 1"/>
    <property type="match status" value="2"/>
</dbReference>
<dbReference type="HAMAP" id="MF_00473">
    <property type="entry name" value="G6P_isomerase"/>
    <property type="match status" value="1"/>
</dbReference>
<dbReference type="InterPro" id="IPR001672">
    <property type="entry name" value="G6P_Isomerase"/>
</dbReference>
<dbReference type="InterPro" id="IPR023096">
    <property type="entry name" value="G6P_Isomerase_C"/>
</dbReference>
<dbReference type="InterPro" id="IPR018189">
    <property type="entry name" value="Phosphoglucose_isomerase_CS"/>
</dbReference>
<dbReference type="InterPro" id="IPR046348">
    <property type="entry name" value="SIS_dom_sf"/>
</dbReference>
<dbReference type="InterPro" id="IPR035476">
    <property type="entry name" value="SIS_PGI_1"/>
</dbReference>
<dbReference type="InterPro" id="IPR035482">
    <property type="entry name" value="SIS_PGI_2"/>
</dbReference>
<dbReference type="NCBIfam" id="NF001211">
    <property type="entry name" value="PRK00179.1"/>
    <property type="match status" value="1"/>
</dbReference>
<dbReference type="PANTHER" id="PTHR11469">
    <property type="entry name" value="GLUCOSE-6-PHOSPHATE ISOMERASE"/>
    <property type="match status" value="1"/>
</dbReference>
<dbReference type="PANTHER" id="PTHR11469:SF1">
    <property type="entry name" value="GLUCOSE-6-PHOSPHATE ISOMERASE"/>
    <property type="match status" value="1"/>
</dbReference>
<dbReference type="Pfam" id="PF00342">
    <property type="entry name" value="PGI"/>
    <property type="match status" value="1"/>
</dbReference>
<dbReference type="PRINTS" id="PR00662">
    <property type="entry name" value="G6PISOMERASE"/>
</dbReference>
<dbReference type="SUPFAM" id="SSF53697">
    <property type="entry name" value="SIS domain"/>
    <property type="match status" value="1"/>
</dbReference>
<dbReference type="PROSITE" id="PS00765">
    <property type="entry name" value="P_GLUCOSE_ISOMERASE_1"/>
    <property type="match status" value="1"/>
</dbReference>
<dbReference type="PROSITE" id="PS00174">
    <property type="entry name" value="P_GLUCOSE_ISOMERASE_2"/>
    <property type="match status" value="1"/>
</dbReference>
<dbReference type="PROSITE" id="PS51463">
    <property type="entry name" value="P_GLUCOSE_ISOMERASE_3"/>
    <property type="match status" value="1"/>
</dbReference>
<accession>A3QBW1</accession>
<comment type="function">
    <text evidence="1">Catalyzes the reversible isomerization of glucose-6-phosphate to fructose-6-phosphate.</text>
</comment>
<comment type="catalytic activity">
    <reaction evidence="1">
        <text>alpha-D-glucose 6-phosphate = beta-D-fructose 6-phosphate</text>
        <dbReference type="Rhea" id="RHEA:11816"/>
        <dbReference type="ChEBI" id="CHEBI:57634"/>
        <dbReference type="ChEBI" id="CHEBI:58225"/>
        <dbReference type="EC" id="5.3.1.9"/>
    </reaction>
</comment>
<comment type="pathway">
    <text evidence="1">Carbohydrate biosynthesis; gluconeogenesis.</text>
</comment>
<comment type="pathway">
    <text evidence="1">Carbohydrate degradation; glycolysis; D-glyceraldehyde 3-phosphate and glycerone phosphate from D-glucose: step 2/4.</text>
</comment>
<comment type="subcellular location">
    <subcellularLocation>
        <location evidence="1">Cytoplasm</location>
    </subcellularLocation>
</comment>
<comment type="similarity">
    <text evidence="1">Belongs to the GPI family.</text>
</comment>
<reference key="1">
    <citation type="submission" date="2007-03" db="EMBL/GenBank/DDBJ databases">
        <title>Complete sequence of Shewanella loihica PV-4.</title>
        <authorList>
            <consortium name="US DOE Joint Genome Institute"/>
            <person name="Copeland A."/>
            <person name="Lucas S."/>
            <person name="Lapidus A."/>
            <person name="Barry K."/>
            <person name="Detter J.C."/>
            <person name="Glavina del Rio T."/>
            <person name="Hammon N."/>
            <person name="Israni S."/>
            <person name="Dalin E."/>
            <person name="Tice H."/>
            <person name="Pitluck S."/>
            <person name="Chain P."/>
            <person name="Malfatti S."/>
            <person name="Shin M."/>
            <person name="Vergez L."/>
            <person name="Schmutz J."/>
            <person name="Larimer F."/>
            <person name="Land M."/>
            <person name="Hauser L."/>
            <person name="Kyrpides N."/>
            <person name="Mikhailova N."/>
            <person name="Romine M.F."/>
            <person name="Serres G."/>
            <person name="Fredrickson J."/>
            <person name="Tiedje J."/>
            <person name="Richardson P."/>
        </authorList>
    </citation>
    <scope>NUCLEOTIDE SEQUENCE [LARGE SCALE GENOMIC DNA]</scope>
    <source>
        <strain>ATCC BAA-1088 / PV-4</strain>
    </source>
</reference>
<keyword id="KW-0963">Cytoplasm</keyword>
<keyword id="KW-0312">Gluconeogenesis</keyword>
<keyword id="KW-0324">Glycolysis</keyword>
<keyword id="KW-0413">Isomerase</keyword>
<keyword id="KW-1185">Reference proteome</keyword>
<evidence type="ECO:0000255" key="1">
    <source>
        <dbReference type="HAMAP-Rule" id="MF_00473"/>
    </source>
</evidence>
<proteinExistence type="inferred from homology"/>
<protein>
    <recommendedName>
        <fullName evidence="1">Glucose-6-phosphate isomerase</fullName>
        <shortName evidence="1">GPI</shortName>
        <ecNumber evidence="1">5.3.1.9</ecNumber>
    </recommendedName>
    <alternativeName>
        <fullName evidence="1">Phosphoglucose isomerase</fullName>
        <shortName evidence="1">PGI</shortName>
    </alternativeName>
    <alternativeName>
        <fullName evidence="1">Phosphohexose isomerase</fullName>
        <shortName evidence="1">PHI</shortName>
    </alternativeName>
</protein>
<organism>
    <name type="scientific">Shewanella loihica (strain ATCC BAA-1088 / PV-4)</name>
    <dbReference type="NCBI Taxonomy" id="323850"/>
    <lineage>
        <taxon>Bacteria</taxon>
        <taxon>Pseudomonadati</taxon>
        <taxon>Pseudomonadota</taxon>
        <taxon>Gammaproteobacteria</taxon>
        <taxon>Alteromonadales</taxon>
        <taxon>Shewanellaceae</taxon>
        <taxon>Shewanella</taxon>
    </lineage>
</organism>
<sequence>MTKLTQQDAWAQLEAQAAKLPHMRELFEADPQRFDKMSLSACGLLLDYSKNRADEQTLEQLFKLAKSAGLSDKIHAMFDGEIINNTEKRAVLHTALRAEADEVILVDGQNIVPEVKQTQAKMAKFVEAVTSGEWKGYTGKAITDIVSIGIGGSFLGPKIVTQALRPYWNPALKCHFVANVDATSLCEKLRLVDPETTLFVMSSKSFGTQETLTNTLSAKAWFLKNGGTQVDIAKHFVAVTSNVAKATEFGMDADNIFPMWDWVGGRYSLWSAIGLPIALLIGMDNFYQLLAGAKSMDKHFVEAPLEQNMPVIMGLFSLLYGNFYQAQSHVVLTYDHYLRGLPAYFQQLDMESNGKSVTLNGDNVDHATGPVIWGGEGTNGQHAYHQLLHQGTALIPADFILPLQSHNPLGEHHVQLASNCFGQTQALMQGRTFDEALAELDGSSQSQEEKALIAKHKVMEGNKPSNTLLMDKLTPETLGALIALYEHRTFVQGAIWDINSFDQWGVELGKTLGNDVLARLQSDEEAKALDASSNALINLFRRGHL</sequence>